<feature type="chain" id="PRO_0000180629" description="Glucose-6-phosphate isomerase 1">
    <location>
        <begin position="1"/>
        <end position="546"/>
    </location>
</feature>
<feature type="active site" description="Proton donor" evidence="1">
    <location>
        <position position="353"/>
    </location>
</feature>
<feature type="active site" evidence="1">
    <location>
        <position position="384"/>
    </location>
</feature>
<feature type="active site" evidence="1">
    <location>
        <position position="512"/>
    </location>
</feature>
<reference key="1">
    <citation type="journal article" date="2005" name="Proc. Natl. Acad. Sci. U.S.A.">
        <title>The psychrophilic lifestyle as revealed by the genome sequence of Colwellia psychrerythraea 34H through genomic and proteomic analyses.</title>
        <authorList>
            <person name="Methe B.A."/>
            <person name="Nelson K.E."/>
            <person name="Deming J.W."/>
            <person name="Momen B."/>
            <person name="Melamud E."/>
            <person name="Zhang X."/>
            <person name="Moult J."/>
            <person name="Madupu R."/>
            <person name="Nelson W.C."/>
            <person name="Dodson R.J."/>
            <person name="Brinkac L.M."/>
            <person name="Daugherty S.C."/>
            <person name="Durkin A.S."/>
            <person name="DeBoy R.T."/>
            <person name="Kolonay J.F."/>
            <person name="Sullivan S.A."/>
            <person name="Zhou L."/>
            <person name="Davidsen T.M."/>
            <person name="Wu M."/>
            <person name="Huston A.L."/>
            <person name="Lewis M."/>
            <person name="Weaver B."/>
            <person name="Weidman J.F."/>
            <person name="Khouri H."/>
            <person name="Utterback T.R."/>
            <person name="Feldblyum T.V."/>
            <person name="Fraser C.M."/>
        </authorList>
    </citation>
    <scope>NUCLEOTIDE SEQUENCE [LARGE SCALE GENOMIC DNA]</scope>
    <source>
        <strain>34H / ATCC BAA-681</strain>
    </source>
</reference>
<protein>
    <recommendedName>
        <fullName evidence="1">Glucose-6-phosphate isomerase 1</fullName>
        <shortName evidence="1">GPI 1</shortName>
        <ecNumber evidence="1">5.3.1.9</ecNumber>
    </recommendedName>
    <alternativeName>
        <fullName evidence="1">Phosphoglucose isomerase 1</fullName>
        <shortName evidence="1">PGI 1</shortName>
    </alternativeName>
    <alternativeName>
        <fullName evidence="1">Phosphohexose isomerase 1</fullName>
        <shortName evidence="1">PHI 1</shortName>
    </alternativeName>
</protein>
<organism>
    <name type="scientific">Colwellia psychrerythraea (strain 34H / ATCC BAA-681)</name>
    <name type="common">Vibrio psychroerythus</name>
    <dbReference type="NCBI Taxonomy" id="167879"/>
    <lineage>
        <taxon>Bacteria</taxon>
        <taxon>Pseudomonadati</taxon>
        <taxon>Pseudomonadota</taxon>
        <taxon>Gammaproteobacteria</taxon>
        <taxon>Alteromonadales</taxon>
        <taxon>Colwelliaceae</taxon>
        <taxon>Colwellia</taxon>
    </lineage>
</organism>
<evidence type="ECO:0000255" key="1">
    <source>
        <dbReference type="HAMAP-Rule" id="MF_00473"/>
    </source>
</evidence>
<name>G6PI1_COLP3</name>
<keyword id="KW-0963">Cytoplasm</keyword>
<keyword id="KW-0312">Gluconeogenesis</keyword>
<keyword id="KW-0324">Glycolysis</keyword>
<keyword id="KW-0413">Isomerase</keyword>
<sequence length="546" mass="60935">MSSRQTLASWKKLQLLAQDKKSQHMNTLFAQDSERFNKFSIELPNMLLDYSKNLIDTETLDALLALAEETQVCDWRAKMFAGEKINKTEDRAVLHTALRRQSDEAFIIEGENVTEHVKNQLAEMEVFVNKVRQGHWLGYSGKRITDIVNIGVGGSNLGPQMVTEALKHYSDGSVNVHYVSNVDGAQIAEVLRPLEPEKVLFIVSSKTFTTTETMTNARTAINWLTSASFDENSVAKHFVAVTANKENAMSFGIEEQNIFDMWDWVGGRFSLWSAIGLAIALDLGFDKFEELLAGAHDMDQHFINAPLKDNFPAILALISVWNTTFLGSQSQAILPYDQTLHMLTAYLQQAEMESNGKSVSWDGDEIDYATVPSIWGELGINGQHAFYQYLHQSNNVVPADFIGSVKSVTPVKGHHETLMANFFAQTQALMVGVNEEQVRADLKAKGRNAEYIDNVAPHKVHKGNRPTNTILLKCINPRNLGSLIAAYEHKIFVQGIILQICSFDQWGVELGKGLAAEIQTELQTDNISAQHDCSTSSLLKFYQSAK</sequence>
<proteinExistence type="inferred from homology"/>
<comment type="function">
    <text evidence="1">Catalyzes the reversible isomerization of glucose-6-phosphate to fructose-6-phosphate.</text>
</comment>
<comment type="catalytic activity">
    <reaction evidence="1">
        <text>alpha-D-glucose 6-phosphate = beta-D-fructose 6-phosphate</text>
        <dbReference type="Rhea" id="RHEA:11816"/>
        <dbReference type="ChEBI" id="CHEBI:57634"/>
        <dbReference type="ChEBI" id="CHEBI:58225"/>
        <dbReference type="EC" id="5.3.1.9"/>
    </reaction>
</comment>
<comment type="pathway">
    <text evidence="1">Carbohydrate biosynthesis; gluconeogenesis.</text>
</comment>
<comment type="pathway">
    <text evidence="1">Carbohydrate degradation; glycolysis; D-glyceraldehyde 3-phosphate and glycerone phosphate from D-glucose: step 2/4.</text>
</comment>
<comment type="subcellular location">
    <subcellularLocation>
        <location evidence="1">Cytoplasm</location>
    </subcellularLocation>
</comment>
<comment type="similarity">
    <text evidence="1">Belongs to the GPI family.</text>
</comment>
<dbReference type="EC" id="5.3.1.9" evidence="1"/>
<dbReference type="EMBL" id="CP000083">
    <property type="protein sequence ID" value="AAZ27551.1"/>
    <property type="molecule type" value="Genomic_DNA"/>
</dbReference>
<dbReference type="SMR" id="Q487J6"/>
<dbReference type="STRING" id="167879.CPS_1020"/>
<dbReference type="KEGG" id="cps:CPS_1020"/>
<dbReference type="eggNOG" id="COG0166">
    <property type="taxonomic scope" value="Bacteria"/>
</dbReference>
<dbReference type="HOGENOM" id="CLU_017947_3_1_6"/>
<dbReference type="UniPathway" id="UPA00109">
    <property type="reaction ID" value="UER00181"/>
</dbReference>
<dbReference type="UniPathway" id="UPA00138"/>
<dbReference type="Proteomes" id="UP000000547">
    <property type="component" value="Chromosome"/>
</dbReference>
<dbReference type="GO" id="GO:0005829">
    <property type="term" value="C:cytosol"/>
    <property type="evidence" value="ECO:0007669"/>
    <property type="project" value="TreeGrafter"/>
</dbReference>
<dbReference type="GO" id="GO:0097367">
    <property type="term" value="F:carbohydrate derivative binding"/>
    <property type="evidence" value="ECO:0007669"/>
    <property type="project" value="InterPro"/>
</dbReference>
<dbReference type="GO" id="GO:0004347">
    <property type="term" value="F:glucose-6-phosphate isomerase activity"/>
    <property type="evidence" value="ECO:0007669"/>
    <property type="project" value="UniProtKB-UniRule"/>
</dbReference>
<dbReference type="GO" id="GO:0048029">
    <property type="term" value="F:monosaccharide binding"/>
    <property type="evidence" value="ECO:0007669"/>
    <property type="project" value="TreeGrafter"/>
</dbReference>
<dbReference type="GO" id="GO:0006094">
    <property type="term" value="P:gluconeogenesis"/>
    <property type="evidence" value="ECO:0007669"/>
    <property type="project" value="UniProtKB-UniRule"/>
</dbReference>
<dbReference type="GO" id="GO:0051156">
    <property type="term" value="P:glucose 6-phosphate metabolic process"/>
    <property type="evidence" value="ECO:0007669"/>
    <property type="project" value="TreeGrafter"/>
</dbReference>
<dbReference type="GO" id="GO:0006096">
    <property type="term" value="P:glycolytic process"/>
    <property type="evidence" value="ECO:0007669"/>
    <property type="project" value="UniProtKB-UniRule"/>
</dbReference>
<dbReference type="CDD" id="cd05015">
    <property type="entry name" value="SIS_PGI_1"/>
    <property type="match status" value="1"/>
</dbReference>
<dbReference type="CDD" id="cd05016">
    <property type="entry name" value="SIS_PGI_2"/>
    <property type="match status" value="1"/>
</dbReference>
<dbReference type="Gene3D" id="1.10.1390.10">
    <property type="match status" value="1"/>
</dbReference>
<dbReference type="Gene3D" id="3.40.50.10490">
    <property type="entry name" value="Glucose-6-phosphate isomerase like protein, domain 1"/>
    <property type="match status" value="2"/>
</dbReference>
<dbReference type="HAMAP" id="MF_00473">
    <property type="entry name" value="G6P_isomerase"/>
    <property type="match status" value="1"/>
</dbReference>
<dbReference type="InterPro" id="IPR001672">
    <property type="entry name" value="G6P_Isomerase"/>
</dbReference>
<dbReference type="InterPro" id="IPR023096">
    <property type="entry name" value="G6P_Isomerase_C"/>
</dbReference>
<dbReference type="InterPro" id="IPR018189">
    <property type="entry name" value="Phosphoglucose_isomerase_CS"/>
</dbReference>
<dbReference type="InterPro" id="IPR046348">
    <property type="entry name" value="SIS_dom_sf"/>
</dbReference>
<dbReference type="InterPro" id="IPR035476">
    <property type="entry name" value="SIS_PGI_1"/>
</dbReference>
<dbReference type="InterPro" id="IPR035482">
    <property type="entry name" value="SIS_PGI_2"/>
</dbReference>
<dbReference type="NCBIfam" id="NF001211">
    <property type="entry name" value="PRK00179.1"/>
    <property type="match status" value="1"/>
</dbReference>
<dbReference type="PANTHER" id="PTHR11469">
    <property type="entry name" value="GLUCOSE-6-PHOSPHATE ISOMERASE"/>
    <property type="match status" value="1"/>
</dbReference>
<dbReference type="PANTHER" id="PTHR11469:SF1">
    <property type="entry name" value="GLUCOSE-6-PHOSPHATE ISOMERASE"/>
    <property type="match status" value="1"/>
</dbReference>
<dbReference type="Pfam" id="PF00342">
    <property type="entry name" value="PGI"/>
    <property type="match status" value="1"/>
</dbReference>
<dbReference type="PRINTS" id="PR00662">
    <property type="entry name" value="G6PISOMERASE"/>
</dbReference>
<dbReference type="SUPFAM" id="SSF53697">
    <property type="entry name" value="SIS domain"/>
    <property type="match status" value="1"/>
</dbReference>
<dbReference type="PROSITE" id="PS00765">
    <property type="entry name" value="P_GLUCOSE_ISOMERASE_1"/>
    <property type="match status" value="1"/>
</dbReference>
<dbReference type="PROSITE" id="PS00174">
    <property type="entry name" value="P_GLUCOSE_ISOMERASE_2"/>
    <property type="match status" value="1"/>
</dbReference>
<dbReference type="PROSITE" id="PS51463">
    <property type="entry name" value="P_GLUCOSE_ISOMERASE_3"/>
    <property type="match status" value="1"/>
</dbReference>
<accession>Q487J6</accession>
<gene>
    <name evidence="1" type="primary">pgi1</name>
    <name type="ordered locus">CPS_1020</name>
</gene>